<name>SLP2_PINMA</name>
<dbReference type="EMBL" id="GT277777">
    <property type="status" value="NOT_ANNOTATED_CDS"/>
    <property type="molecule type" value="mRNA"/>
</dbReference>
<dbReference type="EMBL" id="GT277779">
    <property type="status" value="NOT_ANNOTATED_CDS"/>
    <property type="molecule type" value="mRNA"/>
</dbReference>
<dbReference type="EMBL" id="GT277837">
    <property type="status" value="NOT_ANNOTATED_CDS"/>
    <property type="molecule type" value="mRNA"/>
</dbReference>
<dbReference type="EMBL" id="GT277864">
    <property type="status" value="NOT_ANNOTATED_CDS"/>
    <property type="molecule type" value="mRNA"/>
</dbReference>
<dbReference type="EMBL" id="GT277869">
    <property type="status" value="NOT_ANNOTATED_CDS"/>
    <property type="molecule type" value="mRNA"/>
</dbReference>
<dbReference type="EMBL" id="GT277897">
    <property type="status" value="NOT_ANNOTATED_CDS"/>
    <property type="molecule type" value="mRNA"/>
</dbReference>
<dbReference type="EMBL" id="GT277901">
    <property type="status" value="NOT_ANNOTATED_CDS"/>
    <property type="molecule type" value="mRNA"/>
</dbReference>
<dbReference type="EMBL" id="GT277955">
    <property type="status" value="NOT_ANNOTATED_CDS"/>
    <property type="molecule type" value="mRNA"/>
</dbReference>
<dbReference type="EMBL" id="GT277960">
    <property type="status" value="NOT_ANNOTATED_CDS"/>
    <property type="molecule type" value="mRNA"/>
</dbReference>
<dbReference type="EMBL" id="GT277970">
    <property type="status" value="NOT_ANNOTATED_CDS"/>
    <property type="molecule type" value="mRNA"/>
</dbReference>
<dbReference type="EMBL" id="GT277977">
    <property type="status" value="NOT_ANNOTATED_CDS"/>
    <property type="molecule type" value="mRNA"/>
</dbReference>
<dbReference type="EMBL" id="GT278007">
    <property type="status" value="NOT_ANNOTATED_CDS"/>
    <property type="molecule type" value="mRNA"/>
</dbReference>
<dbReference type="EMBL" id="GT278052">
    <property type="status" value="NOT_ANNOTATED_CDS"/>
    <property type="molecule type" value="mRNA"/>
</dbReference>
<dbReference type="EMBL" id="GT278122">
    <property type="status" value="NOT_ANNOTATED_CDS"/>
    <property type="molecule type" value="mRNA"/>
</dbReference>
<dbReference type="EMBL" id="GT278163">
    <property type="status" value="NOT_ANNOTATED_CDS"/>
    <property type="molecule type" value="mRNA"/>
</dbReference>
<dbReference type="EMBL" id="GT278207">
    <property type="status" value="NOT_ANNOTATED_CDS"/>
    <property type="molecule type" value="mRNA"/>
</dbReference>
<dbReference type="EMBL" id="GT278230">
    <property type="status" value="NOT_ANNOTATED_CDS"/>
    <property type="molecule type" value="mRNA"/>
</dbReference>
<dbReference type="EMBL" id="GT278238">
    <property type="status" value="NOT_ANNOTATED_CDS"/>
    <property type="molecule type" value="mRNA"/>
</dbReference>
<dbReference type="EMBL" id="GT278259">
    <property type="status" value="NOT_ANNOTATED_CDS"/>
    <property type="molecule type" value="mRNA"/>
</dbReference>
<dbReference type="EMBL" id="GT278268">
    <property type="status" value="NOT_ANNOTATED_CDS"/>
    <property type="molecule type" value="mRNA"/>
</dbReference>
<dbReference type="EMBL" id="GT278319">
    <property type="status" value="NOT_ANNOTATED_CDS"/>
    <property type="molecule type" value="mRNA"/>
</dbReference>
<dbReference type="EMBL" id="GT278334">
    <property type="status" value="NOT_ANNOTATED_CDS"/>
    <property type="molecule type" value="mRNA"/>
</dbReference>
<dbReference type="EMBL" id="GT278348">
    <property type="status" value="NOT_ANNOTATED_CDS"/>
    <property type="molecule type" value="mRNA"/>
</dbReference>
<dbReference type="EMBL" id="GT278422">
    <property type="status" value="NOT_ANNOTATED_CDS"/>
    <property type="molecule type" value="mRNA"/>
</dbReference>
<dbReference type="EMBL" id="GT278433">
    <property type="status" value="NOT_ANNOTATED_CDS"/>
    <property type="molecule type" value="mRNA"/>
</dbReference>
<dbReference type="EMBL" id="GT278437">
    <property type="status" value="NOT_ANNOTATED_CDS"/>
    <property type="molecule type" value="mRNA"/>
</dbReference>
<dbReference type="EMBL" id="GT278470">
    <property type="status" value="NOT_ANNOTATED_CDS"/>
    <property type="molecule type" value="mRNA"/>
</dbReference>
<dbReference type="EMBL" id="GT278479">
    <property type="status" value="NOT_ANNOTATED_CDS"/>
    <property type="molecule type" value="mRNA"/>
</dbReference>
<dbReference type="EMBL" id="GT278516">
    <property type="status" value="NOT_ANNOTATED_CDS"/>
    <property type="molecule type" value="mRNA"/>
</dbReference>
<dbReference type="EMBL" id="GT278579">
    <property type="status" value="NOT_ANNOTATED_CDS"/>
    <property type="molecule type" value="mRNA"/>
</dbReference>
<dbReference type="EMBL" id="GT278592">
    <property type="status" value="NOT_ANNOTATED_CDS"/>
    <property type="molecule type" value="mRNA"/>
</dbReference>
<dbReference type="EMBL" id="GT278628">
    <property type="status" value="NOT_ANNOTATED_CDS"/>
    <property type="molecule type" value="mRNA"/>
</dbReference>
<dbReference type="EMBL" id="GT278632">
    <property type="status" value="NOT_ANNOTATED_CDS"/>
    <property type="molecule type" value="mRNA"/>
</dbReference>
<dbReference type="EMBL" id="GT278663">
    <property type="status" value="NOT_ANNOTATED_CDS"/>
    <property type="molecule type" value="mRNA"/>
</dbReference>
<dbReference type="EMBL" id="GT278679">
    <property type="status" value="NOT_ANNOTATED_CDS"/>
    <property type="molecule type" value="mRNA"/>
</dbReference>
<dbReference type="EMBL" id="GT278691">
    <property type="status" value="NOT_ANNOTATED_CDS"/>
    <property type="molecule type" value="mRNA"/>
</dbReference>
<dbReference type="EMBL" id="GT278726">
    <property type="status" value="NOT_ANNOTATED_CDS"/>
    <property type="molecule type" value="mRNA"/>
</dbReference>
<dbReference type="EMBL" id="GT278737">
    <property type="status" value="NOT_ANNOTATED_CDS"/>
    <property type="molecule type" value="mRNA"/>
</dbReference>
<dbReference type="EMBL" id="GT278752">
    <property type="status" value="NOT_ANNOTATED_CDS"/>
    <property type="molecule type" value="mRNA"/>
</dbReference>
<dbReference type="EMBL" id="GT278758">
    <property type="status" value="NOT_ANNOTATED_CDS"/>
    <property type="molecule type" value="mRNA"/>
</dbReference>
<dbReference type="EMBL" id="GT278799">
    <property type="status" value="NOT_ANNOTATED_CDS"/>
    <property type="molecule type" value="mRNA"/>
</dbReference>
<dbReference type="EMBL" id="GT278816">
    <property type="status" value="NOT_ANNOTATED_CDS"/>
    <property type="molecule type" value="mRNA"/>
</dbReference>
<dbReference type="EMBL" id="GT278820">
    <property type="status" value="NOT_ANNOTATED_CDS"/>
    <property type="molecule type" value="mRNA"/>
</dbReference>
<dbReference type="EMBL" id="GT278888">
    <property type="status" value="NOT_ANNOTATED_CDS"/>
    <property type="molecule type" value="mRNA"/>
</dbReference>
<dbReference type="EMBL" id="GT278932">
    <property type="status" value="NOT_ANNOTATED_CDS"/>
    <property type="molecule type" value="mRNA"/>
</dbReference>
<dbReference type="EMBL" id="GT278945">
    <property type="status" value="NOT_ANNOTATED_CDS"/>
    <property type="molecule type" value="mRNA"/>
</dbReference>
<dbReference type="EMBL" id="GT278952">
    <property type="status" value="NOT_ANNOTATED_CDS"/>
    <property type="molecule type" value="mRNA"/>
</dbReference>
<dbReference type="EMBL" id="GT278970">
    <property type="status" value="NOT_ANNOTATED_CDS"/>
    <property type="molecule type" value="mRNA"/>
</dbReference>
<dbReference type="EMBL" id="GT278976">
    <property type="status" value="NOT_ANNOTATED_CDS"/>
    <property type="molecule type" value="mRNA"/>
</dbReference>
<dbReference type="EMBL" id="GT278988">
    <property type="status" value="NOT_ANNOTATED_CDS"/>
    <property type="molecule type" value="mRNA"/>
</dbReference>
<dbReference type="EMBL" id="GT279019">
    <property type="status" value="NOT_ANNOTATED_CDS"/>
    <property type="molecule type" value="mRNA"/>
</dbReference>
<dbReference type="EMBL" id="GT279021">
    <property type="status" value="NOT_ANNOTATED_CDS"/>
    <property type="molecule type" value="mRNA"/>
</dbReference>
<dbReference type="EMBL" id="GT279032">
    <property type="status" value="NOT_ANNOTATED_CDS"/>
    <property type="molecule type" value="mRNA"/>
</dbReference>
<dbReference type="EMBL" id="GT279042">
    <property type="status" value="NOT_ANNOTATED_CDS"/>
    <property type="molecule type" value="mRNA"/>
</dbReference>
<dbReference type="EMBL" id="GT279095">
    <property type="status" value="NOT_ANNOTATED_CDS"/>
    <property type="molecule type" value="mRNA"/>
</dbReference>
<dbReference type="EMBL" id="GT279112">
    <property type="status" value="NOT_ANNOTATED_CDS"/>
    <property type="molecule type" value="mRNA"/>
</dbReference>
<dbReference type="EMBL" id="GT279177">
    <property type="status" value="NOT_ANNOTATED_CDS"/>
    <property type="molecule type" value="mRNA"/>
</dbReference>
<dbReference type="EMBL" id="GT279199">
    <property type="status" value="NOT_ANNOTATED_CDS"/>
    <property type="molecule type" value="mRNA"/>
</dbReference>
<dbReference type="EMBL" id="GT279224">
    <property type="status" value="NOT_ANNOTATED_CDS"/>
    <property type="molecule type" value="mRNA"/>
</dbReference>
<dbReference type="EMBL" id="GT279258">
    <property type="status" value="NOT_ANNOTATED_CDS"/>
    <property type="molecule type" value="mRNA"/>
</dbReference>
<dbReference type="EMBL" id="GT279276">
    <property type="status" value="NOT_ANNOTATED_CDS"/>
    <property type="molecule type" value="mRNA"/>
</dbReference>
<dbReference type="EMBL" id="GT279326">
    <property type="status" value="NOT_ANNOTATED_CDS"/>
    <property type="molecule type" value="mRNA"/>
</dbReference>
<dbReference type="EMBL" id="GT279335">
    <property type="status" value="NOT_ANNOTATED_CDS"/>
    <property type="molecule type" value="mRNA"/>
</dbReference>
<dbReference type="EMBL" id="GT279340">
    <property type="status" value="NOT_ANNOTATED_CDS"/>
    <property type="molecule type" value="mRNA"/>
</dbReference>
<dbReference type="EMBL" id="GT279359">
    <property type="status" value="NOT_ANNOTATED_CDS"/>
    <property type="molecule type" value="mRNA"/>
</dbReference>
<dbReference type="EMBL" id="GT279374">
    <property type="status" value="NOT_ANNOTATED_CDS"/>
    <property type="molecule type" value="mRNA"/>
</dbReference>
<dbReference type="EMBL" id="GT279380">
    <property type="status" value="NOT_ANNOTATED_CDS"/>
    <property type="molecule type" value="mRNA"/>
</dbReference>
<dbReference type="EMBL" id="GT279382">
    <property type="status" value="NOT_ANNOTATED_CDS"/>
    <property type="molecule type" value="mRNA"/>
</dbReference>
<dbReference type="EMBL" id="GT279389">
    <property type="status" value="NOT_ANNOTATED_CDS"/>
    <property type="molecule type" value="mRNA"/>
</dbReference>
<dbReference type="EMBL" id="GT279402">
    <property type="status" value="NOT_ANNOTATED_CDS"/>
    <property type="molecule type" value="mRNA"/>
</dbReference>
<dbReference type="EMBL" id="GT279436">
    <property type="status" value="NOT_ANNOTATED_CDS"/>
    <property type="molecule type" value="mRNA"/>
</dbReference>
<dbReference type="EMBL" id="GT279522">
    <property type="status" value="NOT_ANNOTATED_CDS"/>
    <property type="molecule type" value="mRNA"/>
</dbReference>
<dbReference type="EMBL" id="GT279526">
    <property type="status" value="NOT_ANNOTATED_CDS"/>
    <property type="molecule type" value="mRNA"/>
</dbReference>
<dbReference type="EMBL" id="GT279567">
    <property type="status" value="NOT_ANNOTATED_CDS"/>
    <property type="molecule type" value="mRNA"/>
</dbReference>
<dbReference type="EMBL" id="GT279571">
    <property type="status" value="NOT_ANNOTATED_CDS"/>
    <property type="molecule type" value="mRNA"/>
</dbReference>
<dbReference type="EMBL" id="GT279584">
    <property type="status" value="NOT_ANNOTATED_CDS"/>
    <property type="molecule type" value="mRNA"/>
</dbReference>
<dbReference type="EMBL" id="GT279587">
    <property type="status" value="NOT_ANNOTATED_CDS"/>
    <property type="molecule type" value="mRNA"/>
</dbReference>
<dbReference type="EMBL" id="GT279595">
    <property type="status" value="NOT_ANNOTATED_CDS"/>
    <property type="molecule type" value="mRNA"/>
</dbReference>
<dbReference type="EMBL" id="GT279613">
    <property type="status" value="NOT_ANNOTATED_CDS"/>
    <property type="molecule type" value="mRNA"/>
</dbReference>
<dbReference type="EMBL" id="GT279619">
    <property type="status" value="NOT_ANNOTATED_CDS"/>
    <property type="molecule type" value="mRNA"/>
</dbReference>
<dbReference type="EMBL" id="GT279621">
    <property type="status" value="NOT_ANNOTATED_CDS"/>
    <property type="molecule type" value="mRNA"/>
</dbReference>
<dbReference type="EMBL" id="GT279660">
    <property type="status" value="NOT_ANNOTATED_CDS"/>
    <property type="molecule type" value="mRNA"/>
</dbReference>
<dbReference type="EMBL" id="GT279696">
    <property type="status" value="NOT_ANNOTATED_CDS"/>
    <property type="molecule type" value="mRNA"/>
</dbReference>
<dbReference type="EMBL" id="GT279714">
    <property type="status" value="NOT_ANNOTATED_CDS"/>
    <property type="molecule type" value="mRNA"/>
</dbReference>
<dbReference type="EMBL" id="GT279718">
    <property type="status" value="NOT_ANNOTATED_CDS"/>
    <property type="molecule type" value="mRNA"/>
</dbReference>
<dbReference type="EMBL" id="GT279752">
    <property type="status" value="NOT_ANNOTATED_CDS"/>
    <property type="molecule type" value="mRNA"/>
</dbReference>
<dbReference type="EMBL" id="GT279757">
    <property type="status" value="NOT_ANNOTATED_CDS"/>
    <property type="molecule type" value="mRNA"/>
</dbReference>
<dbReference type="EMBL" id="GT279766">
    <property type="status" value="NOT_ANNOTATED_CDS"/>
    <property type="molecule type" value="mRNA"/>
</dbReference>
<dbReference type="EMBL" id="GT279786">
    <property type="status" value="NOT_ANNOTATED_CDS"/>
    <property type="molecule type" value="mRNA"/>
</dbReference>
<dbReference type="EMBL" id="GT279791">
    <property type="status" value="NOT_ANNOTATED_CDS"/>
    <property type="molecule type" value="mRNA"/>
</dbReference>
<dbReference type="EMBL" id="GT279832">
    <property type="status" value="NOT_ANNOTATED_CDS"/>
    <property type="molecule type" value="mRNA"/>
</dbReference>
<dbReference type="EMBL" id="GT279868">
    <property type="status" value="NOT_ANNOTATED_CDS"/>
    <property type="molecule type" value="mRNA"/>
</dbReference>
<dbReference type="EMBL" id="GT279891">
    <property type="status" value="NOT_ANNOTATED_CDS"/>
    <property type="molecule type" value="mRNA"/>
</dbReference>
<dbReference type="EMBL" id="GT279988">
    <property type="status" value="NOT_ANNOTATED_CDS"/>
    <property type="molecule type" value="mRNA"/>
</dbReference>
<dbReference type="EMBL" id="GT279997">
    <property type="status" value="NOT_ANNOTATED_CDS"/>
    <property type="molecule type" value="mRNA"/>
</dbReference>
<dbReference type="EMBL" id="GT280024">
    <property type="status" value="NOT_ANNOTATED_CDS"/>
    <property type="molecule type" value="mRNA"/>
</dbReference>
<dbReference type="EMBL" id="GT280026">
    <property type="status" value="NOT_ANNOTATED_CDS"/>
    <property type="molecule type" value="mRNA"/>
</dbReference>
<dbReference type="EMBL" id="GT280069">
    <property type="status" value="NOT_ANNOTATED_CDS"/>
    <property type="molecule type" value="mRNA"/>
</dbReference>
<dbReference type="EMBL" id="GT280072">
    <property type="status" value="NOT_ANNOTATED_CDS"/>
    <property type="molecule type" value="mRNA"/>
</dbReference>
<dbReference type="EMBL" id="GT280091">
    <property type="status" value="NOT_ANNOTATED_CDS"/>
    <property type="molecule type" value="mRNA"/>
</dbReference>
<dbReference type="EMBL" id="GT280099">
    <property type="status" value="NOT_ANNOTATED_CDS"/>
    <property type="molecule type" value="mRNA"/>
</dbReference>
<dbReference type="EMBL" id="GT280103">
    <property type="status" value="NOT_ANNOTATED_CDS"/>
    <property type="molecule type" value="mRNA"/>
</dbReference>
<dbReference type="EMBL" id="GT280108">
    <property type="status" value="NOT_ANNOTATED_CDS"/>
    <property type="molecule type" value="mRNA"/>
</dbReference>
<dbReference type="EMBL" id="GT280126">
    <property type="status" value="NOT_ANNOTATED_CDS"/>
    <property type="molecule type" value="mRNA"/>
</dbReference>
<dbReference type="EMBL" id="GT280142">
    <property type="status" value="NOT_ANNOTATED_CDS"/>
    <property type="molecule type" value="mRNA"/>
</dbReference>
<dbReference type="EMBL" id="GT280159">
    <property type="status" value="NOT_ANNOTATED_CDS"/>
    <property type="molecule type" value="mRNA"/>
</dbReference>
<dbReference type="EMBL" id="GT280174">
    <property type="status" value="NOT_ANNOTATED_CDS"/>
    <property type="molecule type" value="mRNA"/>
</dbReference>
<dbReference type="EMBL" id="GT280201">
    <property type="status" value="NOT_ANNOTATED_CDS"/>
    <property type="molecule type" value="mRNA"/>
</dbReference>
<dbReference type="EMBL" id="GT280210">
    <property type="status" value="NOT_ANNOTATED_CDS"/>
    <property type="molecule type" value="mRNA"/>
</dbReference>
<dbReference type="EMBL" id="GT280231">
    <property type="status" value="NOT_ANNOTATED_CDS"/>
    <property type="molecule type" value="mRNA"/>
</dbReference>
<dbReference type="EMBL" id="GT280275">
    <property type="status" value="NOT_ANNOTATED_CDS"/>
    <property type="molecule type" value="mRNA"/>
</dbReference>
<dbReference type="EMBL" id="GT280289">
    <property type="status" value="NOT_ANNOTATED_CDS"/>
    <property type="molecule type" value="mRNA"/>
</dbReference>
<dbReference type="EMBL" id="GT280312">
    <property type="status" value="NOT_ANNOTATED_CDS"/>
    <property type="molecule type" value="mRNA"/>
</dbReference>
<dbReference type="EMBL" id="GT280324">
    <property type="status" value="NOT_ANNOTATED_CDS"/>
    <property type="molecule type" value="mRNA"/>
</dbReference>
<dbReference type="EMBL" id="GT280344">
    <property type="status" value="NOT_ANNOTATED_CDS"/>
    <property type="molecule type" value="mRNA"/>
</dbReference>
<dbReference type="EMBL" id="GT280370">
    <property type="status" value="NOT_ANNOTATED_CDS"/>
    <property type="molecule type" value="mRNA"/>
</dbReference>
<dbReference type="EMBL" id="GT280383">
    <property type="status" value="NOT_ANNOTATED_CDS"/>
    <property type="molecule type" value="mRNA"/>
</dbReference>
<dbReference type="EMBL" id="GT280433">
    <property type="status" value="NOT_ANNOTATED_CDS"/>
    <property type="molecule type" value="mRNA"/>
</dbReference>
<dbReference type="EMBL" id="GT280461">
    <property type="status" value="NOT_ANNOTATED_CDS"/>
    <property type="molecule type" value="mRNA"/>
</dbReference>
<dbReference type="EMBL" id="GT280467">
    <property type="status" value="NOT_ANNOTATED_CDS"/>
    <property type="molecule type" value="mRNA"/>
</dbReference>
<dbReference type="EMBL" id="GT280515">
    <property type="status" value="NOT_ANNOTATED_CDS"/>
    <property type="molecule type" value="mRNA"/>
</dbReference>
<dbReference type="EMBL" id="GT280529">
    <property type="status" value="NOT_ANNOTATED_CDS"/>
    <property type="molecule type" value="mRNA"/>
</dbReference>
<dbReference type="EMBL" id="GT280533">
    <property type="status" value="NOT_ANNOTATED_CDS"/>
    <property type="molecule type" value="mRNA"/>
</dbReference>
<dbReference type="EMBL" id="GT280617">
    <property type="status" value="NOT_ANNOTATED_CDS"/>
    <property type="molecule type" value="mRNA"/>
</dbReference>
<dbReference type="EMBL" id="GT280628">
    <property type="status" value="NOT_ANNOTATED_CDS"/>
    <property type="molecule type" value="mRNA"/>
</dbReference>
<dbReference type="EMBL" id="GT280646">
    <property type="status" value="NOT_ANNOTATED_CDS"/>
    <property type="molecule type" value="mRNA"/>
</dbReference>
<dbReference type="EMBL" id="GT280671">
    <property type="status" value="NOT_ANNOTATED_CDS"/>
    <property type="molecule type" value="mRNA"/>
</dbReference>
<dbReference type="EMBL" id="GT280672">
    <property type="status" value="NOT_ANNOTATED_CDS"/>
    <property type="molecule type" value="mRNA"/>
</dbReference>
<dbReference type="EMBL" id="GT280685">
    <property type="status" value="NOT_ANNOTATED_CDS"/>
    <property type="molecule type" value="mRNA"/>
</dbReference>
<dbReference type="EMBL" id="GT280812">
    <property type="status" value="NOT_ANNOTATED_CDS"/>
    <property type="molecule type" value="mRNA"/>
</dbReference>
<dbReference type="EMBL" id="GT280821">
    <property type="status" value="NOT_ANNOTATED_CDS"/>
    <property type="molecule type" value="mRNA"/>
</dbReference>
<dbReference type="EMBL" id="GT280833">
    <property type="status" value="NOT_ANNOTATED_CDS"/>
    <property type="molecule type" value="mRNA"/>
</dbReference>
<dbReference type="EMBL" id="GT280885">
    <property type="status" value="NOT_ANNOTATED_CDS"/>
    <property type="molecule type" value="mRNA"/>
</dbReference>
<dbReference type="EMBL" id="GT280926">
    <property type="status" value="NOT_ANNOTATED_CDS"/>
    <property type="molecule type" value="mRNA"/>
</dbReference>
<dbReference type="EMBL" id="GT280960">
    <property type="status" value="NOT_ANNOTATED_CDS"/>
    <property type="molecule type" value="mRNA"/>
</dbReference>
<dbReference type="EMBL" id="GT280962">
    <property type="status" value="NOT_ANNOTATED_CDS"/>
    <property type="molecule type" value="mRNA"/>
</dbReference>
<dbReference type="EMBL" id="GT280964">
    <property type="status" value="NOT_ANNOTATED_CDS"/>
    <property type="molecule type" value="mRNA"/>
</dbReference>
<dbReference type="EMBL" id="GT280968">
    <property type="status" value="NOT_ANNOTATED_CDS"/>
    <property type="molecule type" value="mRNA"/>
</dbReference>
<dbReference type="EMBL" id="GT281021">
    <property type="status" value="NOT_ANNOTATED_CDS"/>
    <property type="molecule type" value="mRNA"/>
</dbReference>
<dbReference type="EMBL" id="GT281047">
    <property type="status" value="NOT_ANNOTATED_CDS"/>
    <property type="molecule type" value="mRNA"/>
</dbReference>
<dbReference type="EMBL" id="GT281052">
    <property type="status" value="NOT_ANNOTATED_CDS"/>
    <property type="molecule type" value="mRNA"/>
</dbReference>
<dbReference type="EMBL" id="GT281053">
    <property type="status" value="NOT_ANNOTATED_CDS"/>
    <property type="molecule type" value="mRNA"/>
</dbReference>
<dbReference type="EMBL" id="GT281074">
    <property type="status" value="NOT_ANNOTATED_CDS"/>
    <property type="molecule type" value="mRNA"/>
</dbReference>
<dbReference type="EMBL" id="GT281076">
    <property type="status" value="NOT_ANNOTATED_CDS"/>
    <property type="molecule type" value="mRNA"/>
</dbReference>
<dbReference type="EMBL" id="GT281159">
    <property type="status" value="NOT_ANNOTATED_CDS"/>
    <property type="molecule type" value="mRNA"/>
</dbReference>
<dbReference type="EMBL" id="GT281162">
    <property type="status" value="NOT_ANNOTATED_CDS"/>
    <property type="molecule type" value="mRNA"/>
</dbReference>
<dbReference type="EMBL" id="GT281167">
    <property type="status" value="NOT_ANNOTATED_CDS"/>
    <property type="molecule type" value="mRNA"/>
</dbReference>
<dbReference type="EMBL" id="GT281192">
    <property type="status" value="NOT_ANNOTATED_CDS"/>
    <property type="molecule type" value="mRNA"/>
</dbReference>
<dbReference type="EMBL" id="GT281200">
    <property type="status" value="NOT_ANNOTATED_CDS"/>
    <property type="molecule type" value="mRNA"/>
</dbReference>
<dbReference type="EMBL" id="GT281352">
    <property type="status" value="NOT_ANNOTATED_CDS"/>
    <property type="molecule type" value="mRNA"/>
</dbReference>
<dbReference type="EMBL" id="GT281379">
    <property type="status" value="NOT_ANNOTATED_CDS"/>
    <property type="molecule type" value="mRNA"/>
</dbReference>
<dbReference type="EMBL" id="GT281387">
    <property type="status" value="NOT_ANNOTATED_CDS"/>
    <property type="molecule type" value="mRNA"/>
</dbReference>
<dbReference type="EMBL" id="GT281432">
    <property type="status" value="NOT_ANNOTATED_CDS"/>
    <property type="molecule type" value="mRNA"/>
</dbReference>
<dbReference type="EMBL" id="GT281539">
    <property type="status" value="NOT_ANNOTATED_CDS"/>
    <property type="molecule type" value="mRNA"/>
</dbReference>
<dbReference type="EMBL" id="GT281556">
    <property type="status" value="NOT_ANNOTATED_CDS"/>
    <property type="molecule type" value="mRNA"/>
</dbReference>
<dbReference type="EMBL" id="GT281558">
    <property type="status" value="NOT_ANNOTATED_CDS"/>
    <property type="molecule type" value="mRNA"/>
</dbReference>
<dbReference type="EMBL" id="GT281611">
    <property type="status" value="NOT_ANNOTATED_CDS"/>
    <property type="molecule type" value="mRNA"/>
</dbReference>
<dbReference type="EMBL" id="GT281619">
    <property type="status" value="NOT_ANNOTATED_CDS"/>
    <property type="molecule type" value="mRNA"/>
</dbReference>
<dbReference type="EMBL" id="GT281677">
    <property type="status" value="NOT_ANNOTATED_CDS"/>
    <property type="molecule type" value="mRNA"/>
</dbReference>
<dbReference type="EMBL" id="GT281700">
    <property type="status" value="NOT_ANNOTATED_CDS"/>
    <property type="molecule type" value="mRNA"/>
</dbReference>
<dbReference type="EMBL" id="GT281718">
    <property type="status" value="NOT_ANNOTATED_CDS"/>
    <property type="molecule type" value="mRNA"/>
</dbReference>
<dbReference type="EMBL" id="GT281729">
    <property type="status" value="NOT_ANNOTATED_CDS"/>
    <property type="molecule type" value="mRNA"/>
</dbReference>
<dbReference type="EMBL" id="GT281739">
    <property type="status" value="NOT_ANNOTATED_CDS"/>
    <property type="molecule type" value="mRNA"/>
</dbReference>
<dbReference type="EMBL" id="GT281779">
    <property type="status" value="NOT_ANNOTATED_CDS"/>
    <property type="molecule type" value="mRNA"/>
</dbReference>
<dbReference type="EMBL" id="GT281789">
    <property type="status" value="NOT_ANNOTATED_CDS"/>
    <property type="molecule type" value="mRNA"/>
</dbReference>
<dbReference type="EMBL" id="GT281807">
    <property type="status" value="NOT_ANNOTATED_CDS"/>
    <property type="molecule type" value="mRNA"/>
</dbReference>
<dbReference type="EMBL" id="GT281819">
    <property type="status" value="NOT_ANNOTATED_CDS"/>
    <property type="molecule type" value="mRNA"/>
</dbReference>
<dbReference type="EMBL" id="GT281835">
    <property type="status" value="NOT_ANNOTATED_CDS"/>
    <property type="molecule type" value="mRNA"/>
</dbReference>
<dbReference type="EMBL" id="GT281837">
    <property type="status" value="NOT_ANNOTATED_CDS"/>
    <property type="molecule type" value="mRNA"/>
</dbReference>
<dbReference type="EMBL" id="GT281876">
    <property type="status" value="NOT_ANNOTATED_CDS"/>
    <property type="molecule type" value="mRNA"/>
</dbReference>
<dbReference type="EMBL" id="GT281894">
    <property type="status" value="NOT_ANNOTATED_CDS"/>
    <property type="molecule type" value="mRNA"/>
</dbReference>
<dbReference type="EMBL" id="GT281902">
    <property type="status" value="NOT_ANNOTATED_CDS"/>
    <property type="molecule type" value="mRNA"/>
</dbReference>
<dbReference type="EMBL" id="GT281915">
    <property type="status" value="NOT_ANNOTATED_CDS"/>
    <property type="molecule type" value="mRNA"/>
</dbReference>
<dbReference type="EMBL" id="GT281944">
    <property type="status" value="NOT_ANNOTATED_CDS"/>
    <property type="molecule type" value="mRNA"/>
</dbReference>
<dbReference type="EMBL" id="GT282033">
    <property type="status" value="NOT_ANNOTATED_CDS"/>
    <property type="molecule type" value="mRNA"/>
</dbReference>
<dbReference type="EMBL" id="GT282060">
    <property type="status" value="NOT_ANNOTATED_CDS"/>
    <property type="molecule type" value="mRNA"/>
</dbReference>
<dbReference type="EMBL" id="GT282061">
    <property type="status" value="NOT_ANNOTATED_CDS"/>
    <property type="molecule type" value="mRNA"/>
</dbReference>
<dbReference type="EMBL" id="GT282082">
    <property type="status" value="NOT_ANNOTATED_CDS"/>
    <property type="molecule type" value="mRNA"/>
</dbReference>
<dbReference type="EMBL" id="GT282087">
    <property type="status" value="NOT_ANNOTATED_CDS"/>
    <property type="molecule type" value="mRNA"/>
</dbReference>
<dbReference type="EMBL" id="GT282102">
    <property type="status" value="NOT_ANNOTATED_CDS"/>
    <property type="molecule type" value="mRNA"/>
</dbReference>
<dbReference type="EMBL" id="GT282117">
    <property type="status" value="NOT_ANNOTATED_CDS"/>
    <property type="molecule type" value="mRNA"/>
</dbReference>
<dbReference type="EMBL" id="GT282125">
    <property type="status" value="NOT_ANNOTATED_CDS"/>
    <property type="molecule type" value="mRNA"/>
</dbReference>
<dbReference type="EMBL" id="GT282164">
    <property type="status" value="NOT_ANNOTATED_CDS"/>
    <property type="molecule type" value="mRNA"/>
</dbReference>
<dbReference type="EMBL" id="GT282213">
    <property type="status" value="NOT_ANNOTATED_CDS"/>
    <property type="molecule type" value="mRNA"/>
</dbReference>
<dbReference type="EMBL" id="GT282267">
    <property type="status" value="NOT_ANNOTATED_CDS"/>
    <property type="molecule type" value="mRNA"/>
</dbReference>
<dbReference type="EMBL" id="GT282299">
    <property type="status" value="NOT_ANNOTATED_CDS"/>
    <property type="molecule type" value="mRNA"/>
</dbReference>
<dbReference type="EMBL" id="GT282308">
    <property type="status" value="NOT_ANNOTATED_CDS"/>
    <property type="molecule type" value="mRNA"/>
</dbReference>
<dbReference type="EMBL" id="GT282319">
    <property type="status" value="NOT_ANNOTATED_CDS"/>
    <property type="molecule type" value="mRNA"/>
</dbReference>
<dbReference type="EMBL" id="GT282324">
    <property type="status" value="NOT_ANNOTATED_CDS"/>
    <property type="molecule type" value="mRNA"/>
</dbReference>
<dbReference type="EMBL" id="GT282335">
    <property type="status" value="NOT_ANNOTATED_CDS"/>
    <property type="molecule type" value="mRNA"/>
</dbReference>
<dbReference type="EMBL" id="GT282339">
    <property type="status" value="NOT_ANNOTATED_CDS"/>
    <property type="molecule type" value="mRNA"/>
</dbReference>
<dbReference type="EMBL" id="GT282350">
    <property type="status" value="NOT_ANNOTATED_CDS"/>
    <property type="molecule type" value="mRNA"/>
</dbReference>
<dbReference type="EMBL" id="GT282375">
    <property type="status" value="NOT_ANNOTATED_CDS"/>
    <property type="molecule type" value="mRNA"/>
</dbReference>
<dbReference type="EMBL" id="GT282401">
    <property type="status" value="NOT_ANNOTATED_CDS"/>
    <property type="molecule type" value="mRNA"/>
</dbReference>
<dbReference type="EMBL" id="GT282405">
    <property type="status" value="NOT_ANNOTATED_CDS"/>
    <property type="molecule type" value="mRNA"/>
</dbReference>
<dbReference type="EMBL" id="GT282433">
    <property type="status" value="NOT_ANNOTATED_CDS"/>
    <property type="molecule type" value="mRNA"/>
</dbReference>
<dbReference type="EMBL" id="GT282461">
    <property type="status" value="NOT_ANNOTATED_CDS"/>
    <property type="molecule type" value="mRNA"/>
</dbReference>
<dbReference type="EMBL" id="GT282496">
    <property type="status" value="NOT_ANNOTATED_CDS"/>
    <property type="molecule type" value="mRNA"/>
</dbReference>
<dbReference type="EMBL" id="GT282509">
    <property type="status" value="NOT_ANNOTATED_CDS"/>
    <property type="molecule type" value="mRNA"/>
</dbReference>
<dbReference type="EMBL" id="GT282605">
    <property type="status" value="NOT_ANNOTATED_CDS"/>
    <property type="molecule type" value="mRNA"/>
</dbReference>
<dbReference type="EMBL" id="GT282658">
    <property type="status" value="NOT_ANNOTATED_CDS"/>
    <property type="molecule type" value="mRNA"/>
</dbReference>
<dbReference type="EMBL" id="GT282737">
    <property type="status" value="NOT_ANNOTATED_CDS"/>
    <property type="molecule type" value="mRNA"/>
</dbReference>
<dbReference type="EMBL" id="GT282747">
    <property type="status" value="NOT_ANNOTATED_CDS"/>
    <property type="molecule type" value="mRNA"/>
</dbReference>
<dbReference type="EMBL" id="GT282792">
    <property type="status" value="NOT_ANNOTATED_CDS"/>
    <property type="molecule type" value="mRNA"/>
</dbReference>
<dbReference type="EMBL" id="GT282794">
    <property type="status" value="NOT_ANNOTATED_CDS"/>
    <property type="molecule type" value="mRNA"/>
</dbReference>
<dbReference type="EMBL" id="GT282799">
    <property type="status" value="NOT_ANNOTATED_CDS"/>
    <property type="molecule type" value="mRNA"/>
</dbReference>
<dbReference type="EMBL" id="GT282840">
    <property type="status" value="NOT_ANNOTATED_CDS"/>
    <property type="molecule type" value="mRNA"/>
</dbReference>
<dbReference type="EMBL" id="GT282849">
    <property type="status" value="NOT_ANNOTATED_CDS"/>
    <property type="molecule type" value="mRNA"/>
</dbReference>
<dbReference type="EMBL" id="GT282857">
    <property type="status" value="NOT_ANNOTATED_CDS"/>
    <property type="molecule type" value="mRNA"/>
</dbReference>
<dbReference type="EMBL" id="GT282879">
    <property type="status" value="NOT_ANNOTATED_CDS"/>
    <property type="molecule type" value="mRNA"/>
</dbReference>
<dbReference type="EMBL" id="GT282890">
    <property type="status" value="NOT_ANNOTATED_CDS"/>
    <property type="molecule type" value="mRNA"/>
</dbReference>
<dbReference type="EMBL" id="GT282892">
    <property type="status" value="NOT_ANNOTATED_CDS"/>
    <property type="molecule type" value="mRNA"/>
</dbReference>
<dbReference type="EMBL" id="GT282904">
    <property type="status" value="NOT_ANNOTATED_CDS"/>
    <property type="molecule type" value="mRNA"/>
</dbReference>
<dbReference type="EMBL" id="GT282912">
    <property type="status" value="NOT_ANNOTATED_CDS"/>
    <property type="molecule type" value="mRNA"/>
</dbReference>
<dbReference type="EMBL" id="GT282937">
    <property type="status" value="NOT_ANNOTATED_CDS"/>
    <property type="molecule type" value="mRNA"/>
</dbReference>
<dbReference type="EMBL" id="GT282952">
    <property type="status" value="NOT_ANNOTATED_CDS"/>
    <property type="molecule type" value="mRNA"/>
</dbReference>
<dbReference type="EMBL" id="GT282964">
    <property type="status" value="NOT_ANNOTATED_CDS"/>
    <property type="molecule type" value="mRNA"/>
</dbReference>
<dbReference type="EMBL" id="GT282982">
    <property type="status" value="NOT_ANNOTATED_CDS"/>
    <property type="molecule type" value="mRNA"/>
</dbReference>
<dbReference type="EMBL" id="GT283011">
    <property type="status" value="NOT_ANNOTATED_CDS"/>
    <property type="molecule type" value="mRNA"/>
</dbReference>
<dbReference type="EMBL" id="GT283022">
    <property type="status" value="NOT_ANNOTATED_CDS"/>
    <property type="molecule type" value="mRNA"/>
</dbReference>
<dbReference type="EMBL" id="GT283121">
    <property type="status" value="NOT_ANNOTATED_CDS"/>
    <property type="molecule type" value="mRNA"/>
</dbReference>
<dbReference type="EMBL" id="GT283124">
    <property type="status" value="NOT_ANNOTATED_CDS"/>
    <property type="molecule type" value="mRNA"/>
</dbReference>
<dbReference type="EMBL" id="GT283135">
    <property type="status" value="NOT_ANNOTATED_CDS"/>
    <property type="molecule type" value="mRNA"/>
</dbReference>
<dbReference type="EMBL" id="GT283163">
    <property type="status" value="NOT_ANNOTATED_CDS"/>
    <property type="molecule type" value="mRNA"/>
</dbReference>
<dbReference type="EMBL" id="GT283206">
    <property type="status" value="NOT_ANNOTATED_CDS"/>
    <property type="molecule type" value="mRNA"/>
</dbReference>
<dbReference type="EMBL" id="GT283214">
    <property type="status" value="NOT_ANNOTATED_CDS"/>
    <property type="molecule type" value="mRNA"/>
</dbReference>
<dbReference type="EMBL" id="GT283241">
    <property type="status" value="NOT_ANNOTATED_CDS"/>
    <property type="molecule type" value="mRNA"/>
</dbReference>
<dbReference type="EMBL" id="GT283246">
    <property type="status" value="NOT_ANNOTATED_CDS"/>
    <property type="molecule type" value="mRNA"/>
</dbReference>
<dbReference type="EMBL" id="GT283292">
    <property type="status" value="NOT_ANNOTATED_CDS"/>
    <property type="molecule type" value="mRNA"/>
</dbReference>
<dbReference type="EMBL" id="GT283318">
    <property type="status" value="NOT_ANNOTATED_CDS"/>
    <property type="molecule type" value="mRNA"/>
</dbReference>
<dbReference type="EMBL" id="GT283331">
    <property type="status" value="NOT_ANNOTATED_CDS"/>
    <property type="molecule type" value="mRNA"/>
</dbReference>
<dbReference type="EMBL" id="GT283358">
    <property type="status" value="NOT_ANNOTATED_CDS"/>
    <property type="molecule type" value="mRNA"/>
</dbReference>
<dbReference type="EMBL" id="GT283363">
    <property type="status" value="NOT_ANNOTATED_CDS"/>
    <property type="molecule type" value="mRNA"/>
</dbReference>
<dbReference type="EMBL" id="GT283365">
    <property type="status" value="NOT_ANNOTATED_CDS"/>
    <property type="molecule type" value="mRNA"/>
</dbReference>
<dbReference type="EMBL" id="GT283478">
    <property type="status" value="NOT_ANNOTATED_CDS"/>
    <property type="molecule type" value="mRNA"/>
</dbReference>
<dbReference type="EMBL" id="GT283480">
    <property type="status" value="NOT_ANNOTATED_CDS"/>
    <property type="molecule type" value="mRNA"/>
</dbReference>
<dbReference type="EMBL" id="GT283486">
    <property type="status" value="NOT_ANNOTATED_CDS"/>
    <property type="molecule type" value="mRNA"/>
</dbReference>
<dbReference type="EMBL" id="GT283487">
    <property type="status" value="NOT_ANNOTATED_CDS"/>
    <property type="molecule type" value="mRNA"/>
</dbReference>
<dbReference type="EMBL" id="GT283530">
    <property type="status" value="NOT_ANNOTATED_CDS"/>
    <property type="molecule type" value="mRNA"/>
</dbReference>
<dbReference type="EMBL" id="GT283534">
    <property type="status" value="NOT_ANNOTATED_CDS"/>
    <property type="molecule type" value="mRNA"/>
</dbReference>
<dbReference type="EMBL" id="GT283559">
    <property type="status" value="NOT_ANNOTATED_CDS"/>
    <property type="molecule type" value="mRNA"/>
</dbReference>
<dbReference type="EMBL" id="GT283601">
    <property type="status" value="NOT_ANNOTATED_CDS"/>
    <property type="molecule type" value="mRNA"/>
</dbReference>
<dbReference type="EMBL" id="GT283605">
    <property type="status" value="NOT_ANNOTATED_CDS"/>
    <property type="molecule type" value="mRNA"/>
</dbReference>
<dbReference type="EMBL" id="GT283607">
    <property type="status" value="NOT_ANNOTATED_CDS"/>
    <property type="molecule type" value="mRNA"/>
</dbReference>
<dbReference type="EMBL" id="GT283613">
    <property type="status" value="NOT_ANNOTATED_CDS"/>
    <property type="molecule type" value="mRNA"/>
</dbReference>
<dbReference type="EMBL" id="GT283628">
    <property type="status" value="NOT_ANNOTATED_CDS"/>
    <property type="molecule type" value="mRNA"/>
</dbReference>
<dbReference type="EMBL" id="GT283637">
    <property type="status" value="NOT_ANNOTATED_CDS"/>
    <property type="molecule type" value="mRNA"/>
</dbReference>
<dbReference type="EMBL" id="GT283642">
    <property type="status" value="NOT_ANNOTATED_CDS"/>
    <property type="molecule type" value="mRNA"/>
</dbReference>
<dbReference type="EMBL" id="GT283645">
    <property type="status" value="NOT_ANNOTATED_CDS"/>
    <property type="molecule type" value="mRNA"/>
</dbReference>
<dbReference type="EMBL" id="GT283654">
    <property type="status" value="NOT_ANNOTATED_CDS"/>
    <property type="molecule type" value="mRNA"/>
</dbReference>
<dbReference type="EMBL" id="GT283722">
    <property type="status" value="NOT_ANNOTATED_CDS"/>
    <property type="molecule type" value="mRNA"/>
</dbReference>
<dbReference type="EMBL" id="GT283725">
    <property type="status" value="NOT_ANNOTATED_CDS"/>
    <property type="molecule type" value="mRNA"/>
</dbReference>
<dbReference type="EMBL" id="GT283735">
    <property type="status" value="NOT_ANNOTATED_CDS"/>
    <property type="molecule type" value="mRNA"/>
</dbReference>
<dbReference type="EMBL" id="GT283736">
    <property type="status" value="NOT_ANNOTATED_CDS"/>
    <property type="molecule type" value="mRNA"/>
</dbReference>
<dbReference type="EMBL" id="GT283812">
    <property type="status" value="NOT_ANNOTATED_CDS"/>
    <property type="molecule type" value="mRNA"/>
</dbReference>
<dbReference type="EMBL" id="GT283829">
    <property type="status" value="NOT_ANNOTATED_CDS"/>
    <property type="molecule type" value="mRNA"/>
</dbReference>
<dbReference type="EMBL" id="GT283849">
    <property type="status" value="NOT_ANNOTATED_CDS"/>
    <property type="molecule type" value="mRNA"/>
</dbReference>
<dbReference type="EMBL" id="GT283863">
    <property type="status" value="NOT_ANNOTATED_CDS"/>
    <property type="molecule type" value="mRNA"/>
</dbReference>
<dbReference type="EMBL" id="GT283906">
    <property type="status" value="NOT_ANNOTATED_CDS"/>
    <property type="molecule type" value="mRNA"/>
</dbReference>
<dbReference type="EMBL" id="GT283913">
    <property type="status" value="NOT_ANNOTATED_CDS"/>
    <property type="molecule type" value="mRNA"/>
</dbReference>
<dbReference type="EMBL" id="GT283916">
    <property type="status" value="NOT_ANNOTATED_CDS"/>
    <property type="molecule type" value="mRNA"/>
</dbReference>
<dbReference type="EMBL" id="GT283962">
    <property type="status" value="NOT_ANNOTATED_CDS"/>
    <property type="molecule type" value="mRNA"/>
</dbReference>
<dbReference type="EMBL" id="GT283979">
    <property type="status" value="NOT_ANNOTATED_CDS"/>
    <property type="molecule type" value="mRNA"/>
</dbReference>
<dbReference type="EMBL" id="GT283983">
    <property type="status" value="NOT_ANNOTATED_CDS"/>
    <property type="molecule type" value="mRNA"/>
</dbReference>
<dbReference type="EMBL" id="GT284030">
    <property type="status" value="NOT_ANNOTATED_CDS"/>
    <property type="molecule type" value="mRNA"/>
</dbReference>
<dbReference type="EMBL" id="GT284066">
    <property type="status" value="NOT_ANNOTATED_CDS"/>
    <property type="molecule type" value="mRNA"/>
</dbReference>
<dbReference type="EMBL" id="GT284103">
    <property type="status" value="NOT_ANNOTATED_CDS"/>
    <property type="molecule type" value="mRNA"/>
</dbReference>
<dbReference type="EMBL" id="GT284152">
    <property type="status" value="NOT_ANNOTATED_CDS"/>
    <property type="molecule type" value="mRNA"/>
</dbReference>
<dbReference type="EMBL" id="GT284165">
    <property type="status" value="NOT_ANNOTATED_CDS"/>
    <property type="molecule type" value="mRNA"/>
</dbReference>
<dbReference type="EMBL" id="GT284315">
    <property type="status" value="NOT_ANNOTATED_CDS"/>
    <property type="molecule type" value="mRNA"/>
</dbReference>
<dbReference type="EMBL" id="GT284337">
    <property type="status" value="NOT_ANNOTATED_CDS"/>
    <property type="molecule type" value="mRNA"/>
</dbReference>
<dbReference type="EMBL" id="GT284340">
    <property type="status" value="NOT_ANNOTATED_CDS"/>
    <property type="molecule type" value="mRNA"/>
</dbReference>
<dbReference type="EMBL" id="GT284372">
    <property type="status" value="NOT_ANNOTATED_CDS"/>
    <property type="molecule type" value="mRNA"/>
</dbReference>
<dbReference type="EMBL" id="GT284385">
    <property type="status" value="NOT_ANNOTATED_CDS"/>
    <property type="molecule type" value="mRNA"/>
</dbReference>
<dbReference type="EMBL" id="GT284431">
    <property type="status" value="NOT_ANNOTATED_CDS"/>
    <property type="molecule type" value="mRNA"/>
</dbReference>
<dbReference type="EMBL" id="GT284487">
    <property type="status" value="NOT_ANNOTATED_CDS"/>
    <property type="molecule type" value="mRNA"/>
</dbReference>
<dbReference type="EMBL" id="EZ420072">
    <property type="status" value="NOT_ANNOTATED_CDS"/>
    <property type="molecule type" value="mRNA"/>
</dbReference>
<dbReference type="GO" id="GO:0005576">
    <property type="term" value="C:extracellular region"/>
    <property type="evidence" value="ECO:0007669"/>
    <property type="project" value="UniProtKB-SubCell"/>
</dbReference>
<organism>
    <name type="scientific">Pinctada maxima</name>
    <name type="common">Silver-lipped pearl oyster</name>
    <name type="synonym">White-lipped pearl oyster</name>
    <dbReference type="NCBI Taxonomy" id="104660"/>
    <lineage>
        <taxon>Eukaryota</taxon>
        <taxon>Metazoa</taxon>
        <taxon>Spiralia</taxon>
        <taxon>Lophotrochozoa</taxon>
        <taxon>Mollusca</taxon>
        <taxon>Bivalvia</taxon>
        <taxon>Autobranchia</taxon>
        <taxon>Pteriomorphia</taxon>
        <taxon>Pterioida</taxon>
        <taxon>Pterioidea</taxon>
        <taxon>Pteriidae</taxon>
        <taxon>Pinctada</taxon>
    </lineage>
</organism>
<proteinExistence type="evidence at protein level"/>
<comment type="subcellular location">
    <subcellularLocation>
        <location evidence="3">Secreted</location>
    </subcellularLocation>
</comment>
<comment type="tissue specificity">
    <text evidence="3">Prismatic layer of shell (at protein level). Expressed primarily in the mantle with highest level in the mantle edge and lower level in the mantle pallium.</text>
</comment>
<sequence length="394" mass="35687">MKPFISLASLIVLIASASAGGDDDYGKYGYGSYGPGIGGIGGGGGGIVIGGGGGGIGGGIGGGIGGGIGGGGLIGGGGLIGGFGPGSVSGSVNQFGGVRTRAFGLGGTSPAVRGAAQGAATLSALGVASGRPSRVSGVSVGTGGGRALVSGSATPIGGYGIGIPYGVYGGGYGGYGGGYGGYGLGYGGYGGGYGGYGYGGYGYGPDLATFQGHTFGNLATGSINSLTGGYQIPYGGILSLYGPYGGYGGGYGGYGGGYGGYGGGYGIGIGSGGLGYGGYGYGGYGLGGSTLTGVSQSGPFGTASMYGQAYGAGVPLFGTTYFGGVNVGSPYGIYGGGYPIGGIGGGAGPIGGGGIVIGGGVGGIGGGGIGGIGGGGIGGGGIIGGGPIIRKKKY</sequence>
<feature type="signal peptide" evidence="1">
    <location>
        <begin position="1"/>
        <end position="19"/>
    </location>
</feature>
<feature type="chain" id="PRO_0000413085" description="Shematrin-like protein 2" evidence="1">
    <location>
        <begin position="20"/>
        <end position="394"/>
    </location>
</feature>
<keyword id="KW-0903">Direct protein sequencing</keyword>
<keyword id="KW-0964">Secreted</keyword>
<keyword id="KW-0732">Signal</keyword>
<evidence type="ECO:0000255" key="1"/>
<evidence type="ECO:0000269" key="2">
    <source>
    </source>
</evidence>
<evidence type="ECO:0000269" key="3">
    <source>
    </source>
</evidence>
<evidence type="ECO:0000305" key="4"/>
<reference evidence="4" key="1">
    <citation type="journal article" date="2010" name="Mol. Biol. Evol.">
        <title>Parallel evolution of nacre building gene sets in molluscs.</title>
        <authorList>
            <person name="Jackson D.J."/>
            <person name="McDougall C."/>
            <person name="Woodcroft B."/>
            <person name="Moase P."/>
            <person name="Rose R.A."/>
            <person name="Kube M."/>
            <person name="Reinhardt R."/>
            <person name="Rokhsar D.S."/>
            <person name="Montagnani C."/>
            <person name="Joubert C."/>
            <person name="Piquemal D."/>
            <person name="Degnan B.M."/>
        </authorList>
    </citation>
    <scope>NUCLEOTIDE SEQUENCE [MRNA]</scope>
    <scope>IDENTIFICATION</scope>
    <source>
        <tissue evidence="2">Mantle</tissue>
    </source>
</reference>
<reference key="2">
    <citation type="journal article" date="2012" name="Proc. Natl. Acad. Sci. U.S.A.">
        <title>Different secretory repertoires control the biomineralization processes of prism and nacre deposition of the pearl oyster shell.</title>
        <authorList>
            <person name="Marie B."/>
            <person name="Joubert C."/>
            <person name="Tayale A."/>
            <person name="Zanella-Cleon I."/>
            <person name="Belliard C."/>
            <person name="Piquemal D."/>
            <person name="Cochennec-Laureau N."/>
            <person name="Marin F."/>
            <person name="Gueguen Y."/>
            <person name="Montagnani C."/>
        </authorList>
    </citation>
    <scope>PROTEIN SEQUENCE OF 80-99 AND 102-146</scope>
    <scope>SUBCELLULAR LOCATION</scope>
    <scope>TISSUE SPECIFICITY</scope>
    <source>
        <tissue>Shell</tissue>
    </source>
</reference>
<accession>P86950</accession>
<protein>
    <recommendedName>
        <fullName>Shematrin-like protein 2</fullName>
    </recommendedName>
</protein>